<comment type="function">
    <text evidence="5 6">Serine/threonine kinase which acts as an essential component of the MAP kinase signal transduction pathway. MAPK13 is one of the four p38 MAPKs which play an important role in the cascades of cellular responses evoked by extracellular stimuli such as pro-inflammatory cytokines or physical stress leading to direct activation of transcription factors such as ELK1 and ATF2. Accordingly, p38 MAPKs phosphorylate a broad range of proteins and it has been estimated that they may have approximately 200 to 300 substrates each. MAPK13 is one of the less studied p38 MAPK isoforms. Some of the targets are downstream kinases such as MAPKAPK2, which are activated through phosphorylation and further phosphorylate additional targets. Plays a role in the regulation of protein translation by phosphorylating and inactivating EEF2K. Involved in cytoskeletal remodeling through phosphorylation of MAPT and STMN1. Mediates UV irradiation induced up-regulation of the gene expression of CXCL14. Plays an important role in the regulation of epidermal keratinocyte differentiation, apoptosis and skin tumor development. Phosphorylates the transcriptional activator MYB in response to stress which leads to rapid MYB degradation via a proteasome-dependent pathway. MAPK13 also phosphorylates and down-regulates PRKD1 during regulation of insulin secretion in pancreatic beta cells.</text>
</comment>
<comment type="catalytic activity">
    <reaction>
        <text>L-seryl-[protein] + ATP = O-phospho-L-seryl-[protein] + ADP + H(+)</text>
        <dbReference type="Rhea" id="RHEA:17989"/>
        <dbReference type="Rhea" id="RHEA-COMP:9863"/>
        <dbReference type="Rhea" id="RHEA-COMP:11604"/>
        <dbReference type="ChEBI" id="CHEBI:15378"/>
        <dbReference type="ChEBI" id="CHEBI:29999"/>
        <dbReference type="ChEBI" id="CHEBI:30616"/>
        <dbReference type="ChEBI" id="CHEBI:83421"/>
        <dbReference type="ChEBI" id="CHEBI:456216"/>
        <dbReference type="EC" id="2.7.11.24"/>
    </reaction>
</comment>
<comment type="catalytic activity">
    <reaction>
        <text>L-threonyl-[protein] + ATP = O-phospho-L-threonyl-[protein] + ADP + H(+)</text>
        <dbReference type="Rhea" id="RHEA:46608"/>
        <dbReference type="Rhea" id="RHEA-COMP:11060"/>
        <dbReference type="Rhea" id="RHEA-COMP:11605"/>
        <dbReference type="ChEBI" id="CHEBI:15378"/>
        <dbReference type="ChEBI" id="CHEBI:30013"/>
        <dbReference type="ChEBI" id="CHEBI:30616"/>
        <dbReference type="ChEBI" id="CHEBI:61977"/>
        <dbReference type="ChEBI" id="CHEBI:456216"/>
        <dbReference type="EC" id="2.7.11.24"/>
    </reaction>
</comment>
<comment type="cofactor">
    <cofactor>
        <name>Mg(2+)</name>
        <dbReference type="ChEBI" id="CHEBI:18420"/>
    </cofactor>
</comment>
<comment type="activity regulation">
    <text>Activated by phosphorylation on threonine and tyrosine by dual specificity kinases, MAP2K3/MKK3, MAP2K6/MKK6, MAP2K4/MKK4 and MAP2K7/MKK7. Activation by ultraviolet radiation, hyperosmotic shock, anisomycin or by TNF-alpha is mediated by MAP2K3/MKK3. Inhibited by dual specificity phosphatase DUSP1.</text>
</comment>
<comment type="subunit">
    <text evidence="4">Interacts with MAPK8IP2.</text>
</comment>
<comment type="domain">
    <text>The TXY motif contains the threonine and tyrosine residues whose phosphorylation activates the MAP kinases.</text>
</comment>
<comment type="PTM">
    <text evidence="1">Dually phosphorylated on Thr-180 and Tyr-182 by MAP2K3/MKK3, MAP2K4/MKK4, MAP2K6/MKK6 and MAP2K7/MKK7, which activates the enzyme. Dephosphorylated by dual specificity phosphatase DUSP1 (By similarity).</text>
</comment>
<comment type="similarity">
    <text evidence="7">Belongs to the protein kinase superfamily. CMGC Ser/Thr protein kinase family. MAP kinase subfamily.</text>
</comment>
<dbReference type="EC" id="2.7.11.24"/>
<dbReference type="EMBL" id="U81823">
    <property type="protein sequence ID" value="AAD09229.1"/>
    <property type="molecule type" value="mRNA"/>
</dbReference>
<dbReference type="EMBL" id="BC001992">
    <property type="protein sequence ID" value="AAH01992.1"/>
    <property type="molecule type" value="mRNA"/>
</dbReference>
<dbReference type="CCDS" id="CCDS28584.1"/>
<dbReference type="RefSeq" id="NP_036080.2">
    <property type="nucleotide sequence ID" value="NM_011950.2"/>
</dbReference>
<dbReference type="SMR" id="Q9Z1B7"/>
<dbReference type="BioGRID" id="204968">
    <property type="interactions" value="84"/>
</dbReference>
<dbReference type="FunCoup" id="Q9Z1B7">
    <property type="interactions" value="1886"/>
</dbReference>
<dbReference type="STRING" id="10090.ENSMUSP00000156387"/>
<dbReference type="BindingDB" id="Q9Z1B7"/>
<dbReference type="ChEMBL" id="CHEMBL2111473"/>
<dbReference type="iPTMnet" id="Q9Z1B7"/>
<dbReference type="PhosphoSitePlus" id="Q9Z1B7"/>
<dbReference type="jPOST" id="Q9Z1B7"/>
<dbReference type="PaxDb" id="10090-ENSMUSP00000004986"/>
<dbReference type="ProteomicsDB" id="295675"/>
<dbReference type="Antibodypedia" id="2088">
    <property type="antibodies" value="937 antibodies from 39 providers"/>
</dbReference>
<dbReference type="DNASU" id="26415"/>
<dbReference type="Ensembl" id="ENSMUST00000233984.2">
    <property type="protein sequence ID" value="ENSMUSP00000156387.2"/>
    <property type="gene ID" value="ENSMUSG00000004864.14"/>
</dbReference>
<dbReference type="GeneID" id="26415"/>
<dbReference type="KEGG" id="mmu:26415"/>
<dbReference type="UCSC" id="uc008bro.2">
    <property type="organism name" value="mouse"/>
</dbReference>
<dbReference type="AGR" id="MGI:1346864"/>
<dbReference type="CTD" id="5603"/>
<dbReference type="MGI" id="MGI:1346864">
    <property type="gene designation" value="Mapk13"/>
</dbReference>
<dbReference type="VEuPathDB" id="HostDB:ENSMUSG00000004864"/>
<dbReference type="eggNOG" id="KOG0660">
    <property type="taxonomic scope" value="Eukaryota"/>
</dbReference>
<dbReference type="GeneTree" id="ENSGT00940000159584"/>
<dbReference type="HOGENOM" id="CLU_000288_181_1_1"/>
<dbReference type="InParanoid" id="Q9Z1B7"/>
<dbReference type="OMA" id="IIWREAL"/>
<dbReference type="OrthoDB" id="192887at2759"/>
<dbReference type="PhylomeDB" id="Q9Z1B7"/>
<dbReference type="TreeFam" id="TF105100"/>
<dbReference type="Reactome" id="R-MMU-168638">
    <property type="pathway name" value="NOD1/2 Signaling Pathway"/>
</dbReference>
<dbReference type="Reactome" id="R-MMU-4420097">
    <property type="pathway name" value="VEGFA-VEGFR2 Pathway"/>
</dbReference>
<dbReference type="BioGRID-ORCS" id="26415">
    <property type="hits" value="4 hits in 78 CRISPR screens"/>
</dbReference>
<dbReference type="ChiTaRS" id="Mapk13">
    <property type="organism name" value="mouse"/>
</dbReference>
<dbReference type="PRO" id="PR:Q9Z1B7"/>
<dbReference type="Proteomes" id="UP000000589">
    <property type="component" value="Chromosome 17"/>
</dbReference>
<dbReference type="RNAct" id="Q9Z1B7">
    <property type="molecule type" value="protein"/>
</dbReference>
<dbReference type="Bgee" id="ENSMUSG00000004864">
    <property type="expression patterns" value="Expressed in granulocyte and 183 other cell types or tissues"/>
</dbReference>
<dbReference type="ExpressionAtlas" id="Q9Z1B7">
    <property type="expression patterns" value="baseline and differential"/>
</dbReference>
<dbReference type="GO" id="GO:0005654">
    <property type="term" value="C:nucleoplasm"/>
    <property type="evidence" value="ECO:0000304"/>
    <property type="project" value="Reactome"/>
</dbReference>
<dbReference type="GO" id="GO:0005524">
    <property type="term" value="F:ATP binding"/>
    <property type="evidence" value="ECO:0007669"/>
    <property type="project" value="UniProtKB-KW"/>
</dbReference>
<dbReference type="GO" id="GO:0004707">
    <property type="term" value="F:MAP kinase activity"/>
    <property type="evidence" value="ECO:0000250"/>
    <property type="project" value="UniProtKB"/>
</dbReference>
<dbReference type="GO" id="GO:0106310">
    <property type="term" value="F:protein serine kinase activity"/>
    <property type="evidence" value="ECO:0007669"/>
    <property type="project" value="RHEA"/>
</dbReference>
<dbReference type="GO" id="GO:0004674">
    <property type="term" value="F:protein serine/threonine kinase activity"/>
    <property type="evidence" value="ECO:0000266"/>
    <property type="project" value="MGI"/>
</dbReference>
<dbReference type="GO" id="GO:0072740">
    <property type="term" value="P:cellular response to anisomycin"/>
    <property type="evidence" value="ECO:0007669"/>
    <property type="project" value="Ensembl"/>
</dbReference>
<dbReference type="GO" id="GO:0070301">
    <property type="term" value="P:cellular response to hydrogen peroxide"/>
    <property type="evidence" value="ECO:0007669"/>
    <property type="project" value="Ensembl"/>
</dbReference>
<dbReference type="GO" id="GO:0071347">
    <property type="term" value="P:cellular response to interleukin-1"/>
    <property type="evidence" value="ECO:0007669"/>
    <property type="project" value="Ensembl"/>
</dbReference>
<dbReference type="GO" id="GO:1903936">
    <property type="term" value="P:cellular response to sodium arsenite"/>
    <property type="evidence" value="ECO:0007669"/>
    <property type="project" value="Ensembl"/>
</dbReference>
<dbReference type="GO" id="GO:0072709">
    <property type="term" value="P:cellular response to sorbitol"/>
    <property type="evidence" value="ECO:0007669"/>
    <property type="project" value="Ensembl"/>
</dbReference>
<dbReference type="GO" id="GO:0034644">
    <property type="term" value="P:cellular response to UV"/>
    <property type="evidence" value="ECO:0007669"/>
    <property type="project" value="Ensembl"/>
</dbReference>
<dbReference type="GO" id="GO:0050729">
    <property type="term" value="P:positive regulation of inflammatory response"/>
    <property type="evidence" value="ECO:0007669"/>
    <property type="project" value="Ensembl"/>
</dbReference>
<dbReference type="GO" id="GO:0032755">
    <property type="term" value="P:positive regulation of interleukin-6 production"/>
    <property type="evidence" value="ECO:0007669"/>
    <property type="project" value="Ensembl"/>
</dbReference>
<dbReference type="GO" id="GO:0006970">
    <property type="term" value="P:response to osmotic stress"/>
    <property type="evidence" value="ECO:0007669"/>
    <property type="project" value="Ensembl"/>
</dbReference>
<dbReference type="GO" id="GO:0051403">
    <property type="term" value="P:stress-activated MAPK cascade"/>
    <property type="evidence" value="ECO:0000250"/>
    <property type="project" value="UniProtKB"/>
</dbReference>
<dbReference type="CDD" id="cd07879">
    <property type="entry name" value="STKc_p38delta"/>
    <property type="match status" value="1"/>
</dbReference>
<dbReference type="FunFam" id="1.10.510.10:FF:000170">
    <property type="entry name" value="Mitogen-activated protein kinase"/>
    <property type="match status" value="1"/>
</dbReference>
<dbReference type="FunFam" id="3.30.200.20:FF:000769">
    <property type="entry name" value="Mitogen-activated protein kinase 14"/>
    <property type="match status" value="1"/>
</dbReference>
<dbReference type="Gene3D" id="3.30.200.20">
    <property type="entry name" value="Phosphorylase Kinase, domain 1"/>
    <property type="match status" value="1"/>
</dbReference>
<dbReference type="Gene3D" id="1.10.510.10">
    <property type="entry name" value="Transferase(Phosphotransferase) domain 1"/>
    <property type="match status" value="1"/>
</dbReference>
<dbReference type="InterPro" id="IPR011009">
    <property type="entry name" value="Kinase-like_dom_sf"/>
</dbReference>
<dbReference type="InterPro" id="IPR050117">
    <property type="entry name" value="MAP_kinase"/>
</dbReference>
<dbReference type="InterPro" id="IPR003527">
    <property type="entry name" value="MAP_kinase_CS"/>
</dbReference>
<dbReference type="InterPro" id="IPR038785">
    <property type="entry name" value="MAPK13"/>
</dbReference>
<dbReference type="InterPro" id="IPR008352">
    <property type="entry name" value="MAPK_p38-like"/>
</dbReference>
<dbReference type="InterPro" id="IPR000719">
    <property type="entry name" value="Prot_kinase_dom"/>
</dbReference>
<dbReference type="InterPro" id="IPR017441">
    <property type="entry name" value="Protein_kinase_ATP_BS"/>
</dbReference>
<dbReference type="PANTHER" id="PTHR24055">
    <property type="entry name" value="MITOGEN-ACTIVATED PROTEIN KINASE"/>
    <property type="match status" value="1"/>
</dbReference>
<dbReference type="Pfam" id="PF00069">
    <property type="entry name" value="Pkinase"/>
    <property type="match status" value="1"/>
</dbReference>
<dbReference type="PRINTS" id="PR01773">
    <property type="entry name" value="P38MAPKINASE"/>
</dbReference>
<dbReference type="SMART" id="SM00220">
    <property type="entry name" value="S_TKc"/>
    <property type="match status" value="1"/>
</dbReference>
<dbReference type="SUPFAM" id="SSF56112">
    <property type="entry name" value="Protein kinase-like (PK-like)"/>
    <property type="match status" value="1"/>
</dbReference>
<dbReference type="PROSITE" id="PS01351">
    <property type="entry name" value="MAPK"/>
    <property type="match status" value="1"/>
</dbReference>
<dbReference type="PROSITE" id="PS00107">
    <property type="entry name" value="PROTEIN_KINASE_ATP"/>
    <property type="match status" value="1"/>
</dbReference>
<dbReference type="PROSITE" id="PS50011">
    <property type="entry name" value="PROTEIN_KINASE_DOM"/>
    <property type="match status" value="1"/>
</dbReference>
<evidence type="ECO:0000250" key="1"/>
<evidence type="ECO:0000250" key="2">
    <source>
        <dbReference type="UniProtKB" id="O15264"/>
    </source>
</evidence>
<evidence type="ECO:0000255" key="3">
    <source>
        <dbReference type="PROSITE-ProRule" id="PRU00159"/>
    </source>
</evidence>
<evidence type="ECO:0000269" key="4">
    <source>
    </source>
</evidence>
<evidence type="ECO:0000269" key="5">
    <source>
    </source>
</evidence>
<evidence type="ECO:0000269" key="6">
    <source>
    </source>
</evidence>
<evidence type="ECO:0000305" key="7"/>
<evidence type="ECO:0007744" key="8">
    <source>
    </source>
</evidence>
<keyword id="KW-0067">ATP-binding</keyword>
<keyword id="KW-0131">Cell cycle</keyword>
<keyword id="KW-0418">Kinase</keyword>
<keyword id="KW-0547">Nucleotide-binding</keyword>
<keyword id="KW-0597">Phosphoprotein</keyword>
<keyword id="KW-1185">Reference proteome</keyword>
<keyword id="KW-0723">Serine/threonine-protein kinase</keyword>
<keyword id="KW-0346">Stress response</keyword>
<keyword id="KW-0804">Transcription</keyword>
<keyword id="KW-0805">Transcription regulation</keyword>
<keyword id="KW-0808">Transferase</keyword>
<gene>
    <name type="primary">Mapk13</name>
    <name type="synonym">Serk4</name>
</gene>
<feature type="chain" id="PRO_0000186287" description="Mitogen-activated protein kinase 13">
    <location>
        <begin position="1"/>
        <end position="366"/>
    </location>
</feature>
<feature type="domain" description="Protein kinase" evidence="3">
    <location>
        <begin position="25"/>
        <end position="308"/>
    </location>
</feature>
<feature type="short sequence motif" description="TXY">
    <location>
        <begin position="180"/>
        <end position="182"/>
    </location>
</feature>
<feature type="active site" description="Proton acceptor" evidence="3">
    <location>
        <position position="150"/>
    </location>
</feature>
<feature type="binding site" evidence="3">
    <location>
        <begin position="31"/>
        <end position="39"/>
    </location>
    <ligand>
        <name>ATP</name>
        <dbReference type="ChEBI" id="CHEBI:30616"/>
    </ligand>
</feature>
<feature type="binding site" evidence="3">
    <location>
        <position position="54"/>
    </location>
    <ligand>
        <name>ATP</name>
        <dbReference type="ChEBI" id="CHEBI:30616"/>
    </ligand>
</feature>
<feature type="modified residue" description="Phosphothreonine; by MAP2K3, MAP2K4, MAP2K6 and MAP2K7" evidence="2">
    <location>
        <position position="180"/>
    </location>
</feature>
<feature type="modified residue" description="Phosphotyrosine" evidence="8">
    <location>
        <position position="182"/>
    </location>
</feature>
<feature type="modified residue" description="Phosphoserine" evidence="2">
    <location>
        <position position="350"/>
    </location>
</feature>
<feature type="sequence conflict" description="In Ref. 1; AAD09229." evidence="7" ref="1">
    <original>K</original>
    <variation>R</variation>
    <location>
        <position position="45"/>
    </location>
</feature>
<reference key="1">
    <citation type="submission" date="1996-12" db="EMBL/GenBank/DDBJ databases">
        <authorList>
            <person name="Jiang Y."/>
            <person name="Han J."/>
        </authorList>
    </citation>
    <scope>NUCLEOTIDE SEQUENCE [MRNA]</scope>
</reference>
<reference key="2">
    <citation type="journal article" date="2004" name="Genome Res.">
        <title>The status, quality, and expansion of the NIH full-length cDNA project: the Mammalian Gene Collection (MGC).</title>
        <authorList>
            <consortium name="The MGC Project Team"/>
        </authorList>
    </citation>
    <scope>NUCLEOTIDE SEQUENCE [LARGE SCALE MRNA]</scope>
    <source>
        <tissue>Mammary gland</tissue>
    </source>
</reference>
<reference key="3">
    <citation type="journal article" date="2001" name="Curr. Biol.">
        <title>Fibroblast growth factor homologous factors are intracellular signaling proteins.</title>
        <authorList>
            <person name="Schoorlemmer J."/>
            <person name="Goldfarb M."/>
        </authorList>
    </citation>
    <scope>INTERACTION WITH MAPK8IP2</scope>
</reference>
<reference key="4">
    <citation type="journal article" date="2009" name="Cell">
        <title>Regulation of PKD by the MAPK p38delta in insulin secretion and glucose homeostasis.</title>
        <authorList>
            <person name="Sumara G."/>
            <person name="Formentini I."/>
            <person name="Collins S."/>
            <person name="Sumara I."/>
            <person name="Windak R."/>
            <person name="Bodenmiller B."/>
            <person name="Ramracheya R."/>
            <person name="Caille D."/>
            <person name="Jiang H."/>
            <person name="Platt K.A."/>
            <person name="Meda P."/>
            <person name="Aebersold R."/>
            <person name="Rorsman P."/>
            <person name="Ricci R."/>
        </authorList>
    </citation>
    <scope>FUNCTION IN PHOSPHORYLATION OF PRKD1</scope>
</reference>
<reference key="5">
    <citation type="journal article" date="2010" name="Cell">
        <title>A tissue-specific atlas of mouse protein phosphorylation and expression.</title>
        <authorList>
            <person name="Huttlin E.L."/>
            <person name="Jedrychowski M.P."/>
            <person name="Elias J.E."/>
            <person name="Goswami T."/>
            <person name="Rad R."/>
            <person name="Beausoleil S.A."/>
            <person name="Villen J."/>
            <person name="Haas W."/>
            <person name="Sowa M.E."/>
            <person name="Gygi S.P."/>
        </authorList>
    </citation>
    <scope>PHOSPHORYLATION [LARGE SCALE ANALYSIS] AT TYR-182</scope>
    <scope>IDENTIFICATION BY MASS SPECTROMETRY [LARGE SCALE ANALYSIS]</scope>
    <source>
        <tissue>Lung</tissue>
    </source>
</reference>
<reference key="6">
    <citation type="journal article" date="2011" name="Carcinogenesis">
        <title>Evidence of p38gamma and p38delta involvement in cell transformation processes.</title>
        <authorList>
            <person name="Cerezo-Guisado M.I."/>
            <person name="del Reino P."/>
            <person name="Remy G."/>
            <person name="Kuma Y."/>
            <person name="Arthur J.S."/>
            <person name="Gallego-Ortega D."/>
            <person name="Cuenda A."/>
        </authorList>
    </citation>
    <scope>FUNCTION</scope>
</reference>
<reference key="7">
    <citation type="journal article" date="2010" name="Cell Cycle">
        <title>p38delta mitogen-activated protein kinase regulates skin homeostasis and tumorigenesis.</title>
        <authorList>
            <person name="Efimova T."/>
        </authorList>
    </citation>
    <scope>REVIEW ON FUNCTION</scope>
</reference>
<reference key="8">
    <citation type="journal article" date="2010" name="Biochem. J.">
        <title>Mechanisms and functions of p38 MAPK signalling.</title>
        <authorList>
            <person name="Cuadrado A."/>
            <person name="Nebreda A.R."/>
        </authorList>
    </citation>
    <scope>REVIEW ON ACTIVITY REGULATION</scope>
    <scope>REVIEW ON FUNCTION</scope>
</reference>
<sequence>MSLTRKRGFYKQDINKTAWELPKTYLAPAHVGSGAYGAVCSAIDKRTGEKVAIKKLSRPFQSEIFAKRAYRELLLLKHMHHENVIGLLDVFTPASSLRSFHDFYLVMPFMQTDLQKIMGMEFSEDKVQYLVYQMLKGLKYIHSAGIVHRDLKPGNLAVNEDCELKILDFGLARHTDTEMTGYVVTRWYRAPEVILSWMHYNQTVDIWSVGCIMAEMLTGKTLFKGKDYLDQLTQILKVTGVPGAEFVQKLKDKAAKSYIQSLPQSPKKDFTQLFPRASPQAADLLDKMLELDVDKRLTAAQALAHPFFEPFRDPEEETEAQQPFDDALEHEKLSVDEWKQHIYKEISNFSPIARKDSRRRSGMKLQ</sequence>
<protein>
    <recommendedName>
        <fullName>Mitogen-activated protein kinase 13</fullName>
        <shortName>MAP kinase 13</shortName>
        <shortName>MAPK 13</shortName>
        <ecNumber>2.7.11.24</ecNumber>
    </recommendedName>
    <alternativeName>
        <fullName>Mitogen-activated protein kinase p38 delta</fullName>
        <shortName>MAP kinase p38 delta</shortName>
    </alternativeName>
    <alternativeName>
        <fullName>Stress-activated protein kinase 4</fullName>
    </alternativeName>
</protein>
<proteinExistence type="evidence at protein level"/>
<accession>Q9Z1B7</accession>
<accession>Q99M57</accession>
<name>MK13_MOUSE</name>
<organism>
    <name type="scientific">Mus musculus</name>
    <name type="common">Mouse</name>
    <dbReference type="NCBI Taxonomy" id="10090"/>
    <lineage>
        <taxon>Eukaryota</taxon>
        <taxon>Metazoa</taxon>
        <taxon>Chordata</taxon>
        <taxon>Craniata</taxon>
        <taxon>Vertebrata</taxon>
        <taxon>Euteleostomi</taxon>
        <taxon>Mammalia</taxon>
        <taxon>Eutheria</taxon>
        <taxon>Euarchontoglires</taxon>
        <taxon>Glires</taxon>
        <taxon>Rodentia</taxon>
        <taxon>Myomorpha</taxon>
        <taxon>Muroidea</taxon>
        <taxon>Muridae</taxon>
        <taxon>Murinae</taxon>
        <taxon>Mus</taxon>
        <taxon>Mus</taxon>
    </lineage>
</organism>